<sequence length="334" mass="37776">MDGVIVYCLNALVKHGEEINHIKNDFMIKPCCERVCEKVKNVHIGGQSKNNTVIADLPYLDNAVSDVCKSIYKKNVSRISRFANLIKIDDDDKTPTGVYNYFKPKDAIPVIISIGKDKDVCELLISSDKACACIKLNLYKVAILPMDVSFFTKGNASLIILLFDFSIDAAPLLRSVTDNNVIISRHQRLHDELPSSNWFKFYISIKSDYCSILYMVVDGSMMYAIADNRTHAIISKNILDNTTINDECRCCYSEPQIRILDRDEMLNGSSCYMNRHCIMMNLPDVGEFGSSMLGKYEPDMIKIALSVAGNLIRNRDYIPGRRGYSYYVYGIASR</sequence>
<organism>
    <name type="scientific">Monkeypox virus</name>
    <dbReference type="NCBI Taxonomy" id="10244"/>
    <lineage>
        <taxon>Viruses</taxon>
        <taxon>Varidnaviria</taxon>
        <taxon>Bamfordvirae</taxon>
        <taxon>Nucleocytoviricota</taxon>
        <taxon>Pokkesviricetes</taxon>
        <taxon>Chitovirales</taxon>
        <taxon>Poxviridae</taxon>
        <taxon>Chordopoxvirinae</taxon>
        <taxon>Orthopoxvirus</taxon>
    </lineage>
</organism>
<organismHost>
    <name type="scientific">Cynomys gunnisoni</name>
    <name type="common">Gunnison's prairie dog</name>
    <name type="synonym">Spermophilus gunnisoni</name>
    <dbReference type="NCBI Taxonomy" id="45479"/>
</organismHost>
<organismHost>
    <name type="scientific">Cynomys leucurus</name>
    <name type="common">White-tailed prairie dog</name>
    <dbReference type="NCBI Taxonomy" id="99825"/>
</organismHost>
<organismHost>
    <name type="scientific">Cynomys ludovicianus</name>
    <name type="common">Black-tailed prairie dog</name>
    <dbReference type="NCBI Taxonomy" id="45480"/>
</organismHost>
<organismHost>
    <name type="scientific">Cynomys mexicanus</name>
    <name type="common">Mexican prairie dog</name>
    <dbReference type="NCBI Taxonomy" id="99826"/>
</organismHost>
<organismHost>
    <name type="scientific">Cynomys parvidens</name>
    <name type="common">Utah prairie dog</name>
    <dbReference type="NCBI Taxonomy" id="99827"/>
</organismHost>
<organismHost>
    <name type="scientific">Gliridae</name>
    <name type="common">dormice</name>
    <dbReference type="NCBI Taxonomy" id="30650"/>
</organismHost>
<organismHost>
    <name type="scientific">Heliosciurus ruwenzorii</name>
    <name type="common">Ruwenzori sun squirrel</name>
    <dbReference type="NCBI Taxonomy" id="226685"/>
</organismHost>
<organismHost>
    <name type="scientific">Homo sapiens</name>
    <name type="common">Human</name>
    <dbReference type="NCBI Taxonomy" id="9606"/>
</organismHost>
<organismHost>
    <name type="scientific">Mus musculus</name>
    <name type="common">Mouse</name>
    <dbReference type="NCBI Taxonomy" id="10090"/>
</organismHost>
<comment type="induction">
    <text>Expressed in the early phase of the viral replicative cycle.</text>
</comment>
<comment type="similarity">
    <text evidence="1">Belongs to the orthopoxvirus OPG181 family.</text>
</comment>
<name>PG181_MONPV</name>
<keyword id="KW-0244">Early protein</keyword>
<keyword id="KW-1185">Reference proteome</keyword>
<dbReference type="EMBL" id="MT903340">
    <property type="protein sequence ID" value="QNP13030.1"/>
    <property type="molecule type" value="Genomic_DNA"/>
</dbReference>
<dbReference type="RefSeq" id="YP_010377157.1">
    <property type="nucleotide sequence ID" value="NC_063383.1"/>
</dbReference>
<dbReference type="GeneID" id="72551571"/>
<dbReference type="Proteomes" id="UP000516359">
    <property type="component" value="Genome"/>
</dbReference>
<dbReference type="InterPro" id="IPR007032">
    <property type="entry name" value="Poxvirus_A51"/>
</dbReference>
<dbReference type="Pfam" id="PF04948">
    <property type="entry name" value="Pox_A51"/>
    <property type="match status" value="1"/>
</dbReference>
<evidence type="ECO:0000305" key="1"/>
<feature type="chain" id="PRO_0000457597" description="Protein OPG181">
    <location>
        <begin position="1"/>
        <end position="334"/>
    </location>
</feature>
<protein>
    <recommendedName>
        <fullName>Protein OPG181</fullName>
    </recommendedName>
</protein>
<accession>A0A7H0DNE7</accession>
<reference key="1">
    <citation type="journal article" date="2022" name="J. Infect. Dis.">
        <title>Exportation of Monkeypox virus from the African continent.</title>
        <authorList>
            <person name="Mauldin M.R."/>
            <person name="McCollum A.M."/>
            <person name="Nakazawa Y.J."/>
            <person name="Mandra A."/>
            <person name="Whitehouse E.R."/>
            <person name="Davidson W."/>
            <person name="Zhao H."/>
            <person name="Gao J."/>
            <person name="Li Y."/>
            <person name="Doty J."/>
            <person name="Yinka-Ogunleye A."/>
            <person name="Akinpelu A."/>
            <person name="Aruna O."/>
            <person name="Naidoo D."/>
            <person name="Lewandowski K."/>
            <person name="Afrough B."/>
            <person name="Graham V."/>
            <person name="Aarons E."/>
            <person name="Hewson R."/>
            <person name="Vipond R."/>
            <person name="Dunning J."/>
            <person name="Chand M."/>
            <person name="Brown C."/>
            <person name="Cohen-Gihon I."/>
            <person name="Erez N."/>
            <person name="Shifman O."/>
            <person name="Israeli O."/>
            <person name="Sharon M."/>
            <person name="Schwartz E."/>
            <person name="Beth-Din A."/>
            <person name="Zvi A."/>
            <person name="Mak T.M."/>
            <person name="Ng Y.K."/>
            <person name="Cui L."/>
            <person name="Lin R.T.P."/>
            <person name="Olson V.A."/>
            <person name="Brooks T."/>
            <person name="Paran N."/>
            <person name="Ihekweazu C."/>
            <person name="Reynolds M.G."/>
        </authorList>
    </citation>
    <scope>NUCLEOTIDE SEQUENCE [LARGE SCALE GENOMIC DNA]</scope>
    <source>
        <strain>MPXV-M5312_HM12_Rivers</strain>
    </source>
</reference>
<proteinExistence type="evidence at transcript level"/>
<gene>
    <name type="primary">OPG181</name>
    <name type="ORF">MPXVgp161</name>
</gene>